<proteinExistence type="evidence at protein level"/>
<comment type="function">
    <text evidence="3">Specifically mediates the conversion of oxidosqualene ((3S)-2,3-epoxy-2,3-dihydrosqualene) to parkeol.</text>
</comment>
<comment type="catalytic activity">
    <reaction evidence="3">
        <text>(S)-2,3-epoxysqualene = parkeol</text>
        <dbReference type="Rhea" id="RHEA:31851"/>
        <dbReference type="ChEBI" id="CHEBI:15441"/>
        <dbReference type="ChEBI" id="CHEBI:63460"/>
        <dbReference type="EC" id="5.4.99.47"/>
    </reaction>
</comment>
<comment type="subcellular location">
    <subcellularLocation>
        <location evidence="4">Membrane</location>
        <topology evidence="4">Single-pass membrane protein</topology>
    </subcellularLocation>
</comment>
<comment type="similarity">
    <text evidence="4">Belongs to the terpene cyclase/mutase family.</text>
</comment>
<comment type="sequence caution" evidence="4">
    <conflict type="erroneous gene model prediction">
        <sequence resource="EMBL-CDS" id="AAX95229"/>
    </conflict>
    <text>Was originally thought to correspond to two different genes.</text>
</comment>
<comment type="sequence caution" evidence="4">
    <conflict type="erroneous gene model prediction">
        <sequence resource="EMBL-CDS" id="AAX95231"/>
    </conflict>
    <text>Was originally thought to correspond to two different genes.</text>
</comment>
<comment type="sequence caution" evidence="4">
    <conflict type="erroneous gene model prediction">
        <sequence resource="EMBL-CDS" id="ABG22398"/>
    </conflict>
</comment>
<comment type="sequence caution" evidence="4">
    <conflict type="erroneous initiation">
        <sequence resource="EMBL-CDS" id="BAG89914"/>
    </conflict>
    <text>Truncated N-terminus.</text>
</comment>
<comment type="sequence caution" evidence="4">
    <conflict type="erroneous gene model prediction">
        <sequence resource="EMBL-CDS" id="BAH95124"/>
    </conflict>
</comment>
<comment type="sequence caution" evidence="4">
    <conflict type="erroneous gene model prediction">
        <sequence resource="EMBL-CDS" id="EAZ17703"/>
    </conflict>
</comment>
<dbReference type="EC" id="5.4.99.47"/>
<dbReference type="EMBL" id="AC134046">
    <property type="protein sequence ID" value="AAX95229.1"/>
    <property type="status" value="ALT_SEQ"/>
    <property type="molecule type" value="Genomic_DNA"/>
</dbReference>
<dbReference type="EMBL" id="AC134046">
    <property type="protein sequence ID" value="AAX95231.1"/>
    <property type="status" value="ALT_SEQ"/>
    <property type="molecule type" value="Genomic_DNA"/>
</dbReference>
<dbReference type="EMBL" id="DP000010">
    <property type="protein sequence ID" value="ABG22398.1"/>
    <property type="status" value="ALT_SEQ"/>
    <property type="molecule type" value="Genomic_DNA"/>
</dbReference>
<dbReference type="EMBL" id="DP000010">
    <property type="protein sequence ID" value="ABG22399.1"/>
    <property type="molecule type" value="Genomic_DNA"/>
</dbReference>
<dbReference type="EMBL" id="AP008217">
    <property type="protein sequence ID" value="BAH95124.1"/>
    <property type="status" value="ALT_SEQ"/>
    <property type="molecule type" value="Genomic_DNA"/>
</dbReference>
<dbReference type="EMBL" id="AP014967">
    <property type="protein sequence ID" value="BAT13009.1"/>
    <property type="molecule type" value="Genomic_DNA"/>
</dbReference>
<dbReference type="EMBL" id="CM000148">
    <property type="protein sequence ID" value="EAZ17703.1"/>
    <property type="status" value="ALT_SEQ"/>
    <property type="molecule type" value="Genomic_DNA"/>
</dbReference>
<dbReference type="EMBL" id="AK066327">
    <property type="protein sequence ID" value="BAG89914.1"/>
    <property type="status" value="ALT_INIT"/>
    <property type="molecule type" value="mRNA"/>
</dbReference>
<dbReference type="RefSeq" id="XP_015617632.1">
    <property type="nucleotide sequence ID" value="XM_015762146.1"/>
</dbReference>
<dbReference type="RefSeq" id="XP_015617633.1">
    <property type="nucleotide sequence ID" value="XM_015762147.1"/>
</dbReference>
<dbReference type="SMR" id="H2KWF1"/>
<dbReference type="FunCoup" id="H2KWF1">
    <property type="interactions" value="443"/>
</dbReference>
<dbReference type="STRING" id="39947.H2KWF1"/>
<dbReference type="PaxDb" id="39947-H2KWF1"/>
<dbReference type="EnsemblPlants" id="Os11t0189600-01">
    <property type="protein sequence ID" value="Os11t0189600-01"/>
    <property type="gene ID" value="Os11g0189600"/>
</dbReference>
<dbReference type="GeneID" id="9268610"/>
<dbReference type="Gramene" id="Os11t0189600-01">
    <property type="protein sequence ID" value="Os11t0189600-01"/>
    <property type="gene ID" value="Os11g0189600"/>
</dbReference>
<dbReference type="KEGG" id="dosa:Os11g0189600"/>
<dbReference type="eggNOG" id="KOG0497">
    <property type="taxonomic scope" value="Eukaryota"/>
</dbReference>
<dbReference type="InParanoid" id="H2KWF1"/>
<dbReference type="OMA" id="TWLEHIN"/>
<dbReference type="OrthoDB" id="599695at2759"/>
<dbReference type="BioCyc" id="MetaCyc:MONOMER-17969"/>
<dbReference type="BRENDA" id="5.4.99.47">
    <property type="organism ID" value="8948"/>
</dbReference>
<dbReference type="BRENDA" id="5.4.99.B41">
    <property type="organism ID" value="8948"/>
</dbReference>
<dbReference type="Proteomes" id="UP000000763">
    <property type="component" value="Chromosome 11"/>
</dbReference>
<dbReference type="Proteomes" id="UP000007752">
    <property type="component" value="Chromosome 11"/>
</dbReference>
<dbReference type="Proteomes" id="UP000059680">
    <property type="component" value="Chromosome 11"/>
</dbReference>
<dbReference type="ExpressionAtlas" id="H2KWF1">
    <property type="expression patterns" value="baseline and differential"/>
</dbReference>
<dbReference type="GO" id="GO:0005811">
    <property type="term" value="C:lipid droplet"/>
    <property type="evidence" value="ECO:0007669"/>
    <property type="project" value="InterPro"/>
</dbReference>
<dbReference type="GO" id="GO:0016020">
    <property type="term" value="C:membrane"/>
    <property type="evidence" value="ECO:0007669"/>
    <property type="project" value="UniProtKB-SubCell"/>
</dbReference>
<dbReference type="GO" id="GO:0016866">
    <property type="term" value="F:intramolecular transferase activity"/>
    <property type="evidence" value="ECO:0007669"/>
    <property type="project" value="InterPro"/>
</dbReference>
<dbReference type="GO" id="GO:0016104">
    <property type="term" value="P:triterpenoid biosynthetic process"/>
    <property type="evidence" value="ECO:0007669"/>
    <property type="project" value="InterPro"/>
</dbReference>
<dbReference type="CDD" id="cd02892">
    <property type="entry name" value="SQCY_1"/>
    <property type="match status" value="1"/>
</dbReference>
<dbReference type="FunFam" id="1.50.10.20:FF:000011">
    <property type="entry name" value="Terpene cyclase/mutase family member"/>
    <property type="match status" value="1"/>
</dbReference>
<dbReference type="Gene3D" id="1.50.10.20">
    <property type="match status" value="2"/>
</dbReference>
<dbReference type="InterPro" id="IPR032696">
    <property type="entry name" value="SQ_cyclase_C"/>
</dbReference>
<dbReference type="InterPro" id="IPR032697">
    <property type="entry name" value="SQ_cyclase_N"/>
</dbReference>
<dbReference type="InterPro" id="IPR018333">
    <property type="entry name" value="Squalene_cyclase"/>
</dbReference>
<dbReference type="InterPro" id="IPR002365">
    <property type="entry name" value="Terpene_synthase_CS"/>
</dbReference>
<dbReference type="InterPro" id="IPR008930">
    <property type="entry name" value="Terpenoid_cyclase/PrenylTrfase"/>
</dbReference>
<dbReference type="NCBIfam" id="TIGR01787">
    <property type="entry name" value="squalene_cyclas"/>
    <property type="match status" value="1"/>
</dbReference>
<dbReference type="PANTHER" id="PTHR11764:SF37">
    <property type="entry name" value="PARKEOL SYNTHASE"/>
    <property type="match status" value="1"/>
</dbReference>
<dbReference type="PANTHER" id="PTHR11764">
    <property type="entry name" value="TERPENE CYCLASE/MUTASE FAMILY MEMBER"/>
    <property type="match status" value="1"/>
</dbReference>
<dbReference type="Pfam" id="PF13243">
    <property type="entry name" value="SQHop_cyclase_C"/>
    <property type="match status" value="1"/>
</dbReference>
<dbReference type="Pfam" id="PF13249">
    <property type="entry name" value="SQHop_cyclase_N"/>
    <property type="match status" value="1"/>
</dbReference>
<dbReference type="SFLD" id="SFLDG01016">
    <property type="entry name" value="Prenyltransferase_Like_2"/>
    <property type="match status" value="1"/>
</dbReference>
<dbReference type="SUPFAM" id="SSF48239">
    <property type="entry name" value="Terpenoid cyclases/Protein prenyltransferases"/>
    <property type="match status" value="2"/>
</dbReference>
<dbReference type="PROSITE" id="PS01074">
    <property type="entry name" value="TERPENE_SYNTHASES"/>
    <property type="match status" value="1"/>
</dbReference>
<evidence type="ECO:0000250" key="1">
    <source>
        <dbReference type="UniProtKB" id="P48449"/>
    </source>
</evidence>
<evidence type="ECO:0000255" key="2"/>
<evidence type="ECO:0000269" key="3">
    <source>
    </source>
</evidence>
<evidence type="ECO:0000305" key="4"/>
<feature type="chain" id="PRO_0000418965" description="Parkeol synthase">
    <location>
        <begin position="1"/>
        <end position="759"/>
    </location>
</feature>
<feature type="transmembrane region" description="Helical" evidence="2">
    <location>
        <begin position="118"/>
        <end position="138"/>
    </location>
</feature>
<feature type="repeat" description="PFTB 1">
    <location>
        <begin position="147"/>
        <end position="188"/>
    </location>
</feature>
<feature type="repeat" description="PFTB 2">
    <location>
        <begin position="512"/>
        <end position="557"/>
    </location>
</feature>
<feature type="repeat" description="PFTB 3">
    <location>
        <begin position="589"/>
        <end position="629"/>
    </location>
</feature>
<feature type="repeat" description="PFTB 4">
    <location>
        <begin position="638"/>
        <end position="689"/>
    </location>
</feature>
<feature type="active site" description="Proton donor" evidence="1">
    <location>
        <position position="483"/>
    </location>
</feature>
<accession>H2KWF1</accession>
<accession>A0A0P0XZQ3</accession>
<accession>B7EC17</accession>
<accession>C7J910</accession>
<accession>Q53NJ6</accession>
<accession>Q53NK1</accession>
<reference key="1">
    <citation type="journal article" date="2005" name="BMC Biol.">
        <title>The sequence of rice chromosomes 11 and 12, rich in disease resistance genes and recent gene duplications.</title>
        <authorList>
            <consortium name="The rice chromosomes 11 and 12 sequencing consortia"/>
        </authorList>
    </citation>
    <scope>NUCLEOTIDE SEQUENCE [LARGE SCALE GENOMIC DNA]</scope>
    <source>
        <strain>cv. Nipponbare</strain>
    </source>
</reference>
<reference key="2">
    <citation type="journal article" date="2005" name="Nature">
        <title>The map-based sequence of the rice genome.</title>
        <authorList>
            <consortium name="International rice genome sequencing project (IRGSP)"/>
        </authorList>
    </citation>
    <scope>NUCLEOTIDE SEQUENCE [LARGE SCALE GENOMIC DNA]</scope>
    <source>
        <strain>cv. Nipponbare</strain>
    </source>
</reference>
<reference key="3">
    <citation type="journal article" date="2008" name="Nucleic Acids Res.">
        <title>The rice annotation project database (RAP-DB): 2008 update.</title>
        <authorList>
            <consortium name="The rice annotation project (RAP)"/>
        </authorList>
    </citation>
    <scope>GENOME REANNOTATION</scope>
    <source>
        <strain>cv. Nipponbare</strain>
    </source>
</reference>
<reference key="4">
    <citation type="journal article" date="2013" name="Rice">
        <title>Improvement of the Oryza sativa Nipponbare reference genome using next generation sequence and optical map data.</title>
        <authorList>
            <person name="Kawahara Y."/>
            <person name="de la Bastide M."/>
            <person name="Hamilton J.P."/>
            <person name="Kanamori H."/>
            <person name="McCombie W.R."/>
            <person name="Ouyang S."/>
            <person name="Schwartz D.C."/>
            <person name="Tanaka T."/>
            <person name="Wu J."/>
            <person name="Zhou S."/>
            <person name="Childs K.L."/>
            <person name="Davidson R.M."/>
            <person name="Lin H."/>
            <person name="Quesada-Ocampo L."/>
            <person name="Vaillancourt B."/>
            <person name="Sakai H."/>
            <person name="Lee S.S."/>
            <person name="Kim J."/>
            <person name="Numa H."/>
            <person name="Itoh T."/>
            <person name="Buell C.R."/>
            <person name="Matsumoto T."/>
        </authorList>
    </citation>
    <scope>GENOME REANNOTATION</scope>
    <source>
        <strain>cv. Nipponbare</strain>
    </source>
</reference>
<reference key="5">
    <citation type="journal article" date="2005" name="PLoS Biol.">
        <title>The genomes of Oryza sativa: a history of duplications.</title>
        <authorList>
            <person name="Yu J."/>
            <person name="Wang J."/>
            <person name="Lin W."/>
            <person name="Li S."/>
            <person name="Li H."/>
            <person name="Zhou J."/>
            <person name="Ni P."/>
            <person name="Dong W."/>
            <person name="Hu S."/>
            <person name="Zeng C."/>
            <person name="Zhang J."/>
            <person name="Zhang Y."/>
            <person name="Li R."/>
            <person name="Xu Z."/>
            <person name="Li S."/>
            <person name="Li X."/>
            <person name="Zheng H."/>
            <person name="Cong L."/>
            <person name="Lin L."/>
            <person name="Yin J."/>
            <person name="Geng J."/>
            <person name="Li G."/>
            <person name="Shi J."/>
            <person name="Liu J."/>
            <person name="Lv H."/>
            <person name="Li J."/>
            <person name="Wang J."/>
            <person name="Deng Y."/>
            <person name="Ran L."/>
            <person name="Shi X."/>
            <person name="Wang X."/>
            <person name="Wu Q."/>
            <person name="Li C."/>
            <person name="Ren X."/>
            <person name="Wang J."/>
            <person name="Wang X."/>
            <person name="Li D."/>
            <person name="Liu D."/>
            <person name="Zhang X."/>
            <person name="Ji Z."/>
            <person name="Zhao W."/>
            <person name="Sun Y."/>
            <person name="Zhang Z."/>
            <person name="Bao J."/>
            <person name="Han Y."/>
            <person name="Dong L."/>
            <person name="Ji J."/>
            <person name="Chen P."/>
            <person name="Wu S."/>
            <person name="Liu J."/>
            <person name="Xiao Y."/>
            <person name="Bu D."/>
            <person name="Tan J."/>
            <person name="Yang L."/>
            <person name="Ye C."/>
            <person name="Zhang J."/>
            <person name="Xu J."/>
            <person name="Zhou Y."/>
            <person name="Yu Y."/>
            <person name="Zhang B."/>
            <person name="Zhuang S."/>
            <person name="Wei H."/>
            <person name="Liu B."/>
            <person name="Lei M."/>
            <person name="Yu H."/>
            <person name="Li Y."/>
            <person name="Xu H."/>
            <person name="Wei S."/>
            <person name="He X."/>
            <person name="Fang L."/>
            <person name="Zhang Z."/>
            <person name="Zhang Y."/>
            <person name="Huang X."/>
            <person name="Su Z."/>
            <person name="Tong W."/>
            <person name="Li J."/>
            <person name="Tong Z."/>
            <person name="Li S."/>
            <person name="Ye J."/>
            <person name="Wang L."/>
            <person name="Fang L."/>
            <person name="Lei T."/>
            <person name="Chen C.-S."/>
            <person name="Chen H.-C."/>
            <person name="Xu Z."/>
            <person name="Li H."/>
            <person name="Huang H."/>
            <person name="Zhang F."/>
            <person name="Xu H."/>
            <person name="Li N."/>
            <person name="Zhao C."/>
            <person name="Li S."/>
            <person name="Dong L."/>
            <person name="Huang Y."/>
            <person name="Li L."/>
            <person name="Xi Y."/>
            <person name="Qi Q."/>
            <person name="Li W."/>
            <person name="Zhang B."/>
            <person name="Hu W."/>
            <person name="Zhang Y."/>
            <person name="Tian X."/>
            <person name="Jiao Y."/>
            <person name="Liang X."/>
            <person name="Jin J."/>
            <person name="Gao L."/>
            <person name="Zheng W."/>
            <person name="Hao B."/>
            <person name="Liu S.-M."/>
            <person name="Wang W."/>
            <person name="Yuan L."/>
            <person name="Cao M."/>
            <person name="McDermott J."/>
            <person name="Samudrala R."/>
            <person name="Wang J."/>
            <person name="Wong G.K.-S."/>
            <person name="Yang H."/>
        </authorList>
    </citation>
    <scope>NUCLEOTIDE SEQUENCE [LARGE SCALE GENOMIC DNA]</scope>
    <source>
        <strain>cv. Nipponbare</strain>
    </source>
</reference>
<reference key="6">
    <citation type="journal article" date="2003" name="Science">
        <title>Collection, mapping, and annotation of over 28,000 cDNA clones from japonica rice.</title>
        <authorList>
            <consortium name="The rice full-length cDNA consortium"/>
        </authorList>
    </citation>
    <scope>NUCLEOTIDE SEQUENCE [LARGE SCALE MRNA]</scope>
    <source>
        <strain>cv. Nipponbare</strain>
    </source>
</reference>
<reference key="7">
    <citation type="journal article" date="2011" name="Org. Lett.">
        <title>Triterpene cyclases from Oryza sativa L.: cycloartenol, parkeol and achilleol B synthases.</title>
        <authorList>
            <person name="Ito R."/>
            <person name="Mori K."/>
            <person name="Hashimoto I."/>
            <person name="Nakano C."/>
            <person name="Sato T."/>
            <person name="Hoshino T."/>
        </authorList>
    </citation>
    <scope>FUNCTION</scope>
    <scope>CATALYTIC ACTIVITY</scope>
</reference>
<sequence length="759" mass="86127">MWRLKVSEGGSPWLRSVNNLLGRQVWEFDPDLGTPEERADVEKARREFAEHRFERKHSSDLLMRMQFAKENCQKLDLLAVKRGEHEDVMGEAVWSSLKRAISRVCNLQAHDGHWPGDYAGLMFFLPGLIITLHVSGVLNTVLSSEHQKEMRRYIYNHQNEDGGWGLHIEGHSTMLGSSLNYVALRLLGEGPNGGDGCIENGRNWILDHGGATFTTSWGKFWLSVLGVFDWSGNNPVPPELLLLPYQLPFHPGRMSSYIRMVFIPMSYIYGKRFVGPVTPVVLELRSELYNDPYDEIDWNKARTQCAKEDMYYPRSSKLDMFWSFLHKFIEPVLLRWPGRKLREKALATSMRNVHYEDECTRYICFGGVPKALNILACWIEDPSSEAFKCHIARVYDYLWIAEDGMKMQIYDGSQVWDAGLTVEALVATDLVKELGPTLKRAHSFLKNSQLLDNCPRDFNRWYRHISKGGWTFTTADDGWQVSDCTATALKACLLLSRISPEIVGEPLEIDAQYDAVNCLMSLMNDNGGFSAFELVRSNTWLEHINPTEAFGRVMIEYPYVECTSSSIQCLALFKKLHPGHRKEEVENCISKGANFIESSQRSDGSWYGSWGICFTYATWFAVTGLVSAGRTLGNSATVRKACDFLLSKQLPSGGWGESYLSCHDEVYTNLKGNRPHGTHTAWAMIALIDAGQAERDPVPLHRAAKALLNLQLEDGEFPQQEIVGVFLQTAMISYSQYRNIFPIMALTGYRRRVLLAGNI</sequence>
<protein>
    <recommendedName>
        <fullName>Parkeol synthase</fullName>
        <ecNumber>5.4.99.47</ecNumber>
    </recommendedName>
</protein>
<organism>
    <name type="scientific">Oryza sativa subsp. japonica</name>
    <name type="common">Rice</name>
    <dbReference type="NCBI Taxonomy" id="39947"/>
    <lineage>
        <taxon>Eukaryota</taxon>
        <taxon>Viridiplantae</taxon>
        <taxon>Streptophyta</taxon>
        <taxon>Embryophyta</taxon>
        <taxon>Tracheophyta</taxon>
        <taxon>Spermatophyta</taxon>
        <taxon>Magnoliopsida</taxon>
        <taxon>Liliopsida</taxon>
        <taxon>Poales</taxon>
        <taxon>Poaceae</taxon>
        <taxon>BOP clade</taxon>
        <taxon>Oryzoideae</taxon>
        <taxon>Oryzeae</taxon>
        <taxon>Oryzinae</taxon>
        <taxon>Oryza</taxon>
        <taxon>Oryza sativa</taxon>
    </lineage>
</organism>
<name>PAKSY_ORYSJ</name>
<keyword id="KW-0413">Isomerase</keyword>
<keyword id="KW-0472">Membrane</keyword>
<keyword id="KW-1185">Reference proteome</keyword>
<keyword id="KW-0677">Repeat</keyword>
<keyword id="KW-0812">Transmembrane</keyword>
<keyword id="KW-1133">Transmembrane helix</keyword>
<gene>
    <name type="ordered locus">Os11g0189600</name>
    <name type="ordered locus">LOC_Os11g08569</name>
    <name type="ORF">OsJ_33246</name>
</gene>